<dbReference type="EMBL" id="AF292382">
    <property type="protein sequence ID" value="AAK97052.1"/>
    <property type="molecule type" value="mRNA"/>
</dbReference>
<dbReference type="RefSeq" id="NP_001270368.1">
    <property type="nucleotide sequence ID" value="NM_001283439.1"/>
</dbReference>
<dbReference type="SMR" id="Q95LH1"/>
<dbReference type="STRING" id="9541.ENSMFAP00000011154"/>
<dbReference type="GlyCosmos" id="Q95LH1">
    <property type="glycosylation" value="1 site, No reported glycans"/>
</dbReference>
<dbReference type="eggNOG" id="KOG3656">
    <property type="taxonomic scope" value="Eukaryota"/>
</dbReference>
<dbReference type="Proteomes" id="UP000233100">
    <property type="component" value="Unplaced"/>
</dbReference>
<dbReference type="GO" id="GO:0005886">
    <property type="term" value="C:plasma membrane"/>
    <property type="evidence" value="ECO:0000250"/>
    <property type="project" value="UniProtKB"/>
</dbReference>
<dbReference type="GO" id="GO:0097004">
    <property type="term" value="F:adipokinetic hormone binding"/>
    <property type="evidence" value="ECO:0000250"/>
    <property type="project" value="UniProtKB"/>
</dbReference>
<dbReference type="GO" id="GO:0097003">
    <property type="term" value="F:adipokinetic hormone receptor activity"/>
    <property type="evidence" value="ECO:0000250"/>
    <property type="project" value="UniProtKB"/>
</dbReference>
<dbReference type="GO" id="GO:0004875">
    <property type="term" value="F:complement receptor activity"/>
    <property type="evidence" value="ECO:0007669"/>
    <property type="project" value="TreeGrafter"/>
</dbReference>
<dbReference type="GO" id="GO:0004930">
    <property type="term" value="F:G protein-coupled receptor activity"/>
    <property type="evidence" value="ECO:0007669"/>
    <property type="project" value="UniProtKB-KW"/>
</dbReference>
<dbReference type="GO" id="GO:0042593">
    <property type="term" value="P:glucose homeostasis"/>
    <property type="evidence" value="ECO:0000250"/>
    <property type="project" value="UniProtKB"/>
</dbReference>
<dbReference type="GO" id="GO:0006954">
    <property type="term" value="P:inflammatory response"/>
    <property type="evidence" value="ECO:0007669"/>
    <property type="project" value="TreeGrafter"/>
</dbReference>
<dbReference type="GO" id="GO:0007200">
    <property type="term" value="P:phospholipase C-activating G protein-coupled receptor signaling pathway"/>
    <property type="evidence" value="ECO:0007669"/>
    <property type="project" value="TreeGrafter"/>
</dbReference>
<dbReference type="GO" id="GO:0007204">
    <property type="term" value="P:positive regulation of cytosolic calcium ion concentration"/>
    <property type="evidence" value="ECO:0007669"/>
    <property type="project" value="TreeGrafter"/>
</dbReference>
<dbReference type="CDD" id="cd15119">
    <property type="entry name" value="7tmA_GPR1"/>
    <property type="match status" value="1"/>
</dbReference>
<dbReference type="FunFam" id="1.20.1070.10:FF:000034">
    <property type="entry name" value="G-protein coupled receptor 1"/>
    <property type="match status" value="1"/>
</dbReference>
<dbReference type="Gene3D" id="1.20.1070.10">
    <property type="entry name" value="Rhodopsin 7-helix transmembrane proteins"/>
    <property type="match status" value="1"/>
</dbReference>
<dbReference type="InterPro" id="IPR002275">
    <property type="entry name" value="CML2"/>
</dbReference>
<dbReference type="InterPro" id="IPR000826">
    <property type="entry name" value="Formyl_rcpt-rel"/>
</dbReference>
<dbReference type="InterPro" id="IPR000276">
    <property type="entry name" value="GPCR_Rhodpsn"/>
</dbReference>
<dbReference type="InterPro" id="IPR017452">
    <property type="entry name" value="GPCR_Rhodpsn_7TM"/>
</dbReference>
<dbReference type="PANTHER" id="PTHR24225:SF74">
    <property type="entry name" value="CHEMOKINE-LIKE RECEPTOR 1"/>
    <property type="match status" value="1"/>
</dbReference>
<dbReference type="PANTHER" id="PTHR24225">
    <property type="entry name" value="CHEMOTACTIC RECEPTOR"/>
    <property type="match status" value="1"/>
</dbReference>
<dbReference type="Pfam" id="PF00001">
    <property type="entry name" value="7tm_1"/>
    <property type="match status" value="1"/>
</dbReference>
<dbReference type="PRINTS" id="PR00237">
    <property type="entry name" value="GPCRRHODOPSN"/>
</dbReference>
<dbReference type="PRINTS" id="PR01146">
    <property type="entry name" value="GPR1ORPHANR"/>
</dbReference>
<dbReference type="SUPFAM" id="SSF81321">
    <property type="entry name" value="Family A G protein-coupled receptor-like"/>
    <property type="match status" value="1"/>
</dbReference>
<dbReference type="PROSITE" id="PS50262">
    <property type="entry name" value="G_PROTEIN_RECEP_F1_2"/>
    <property type="match status" value="1"/>
</dbReference>
<proteinExistence type="evidence at transcript level"/>
<name>CML2_MACFA</name>
<organism>
    <name type="scientific">Macaca fascicularis</name>
    <name type="common">Crab-eating macaque</name>
    <name type="synonym">Cynomolgus monkey</name>
    <dbReference type="NCBI Taxonomy" id="9541"/>
    <lineage>
        <taxon>Eukaryota</taxon>
        <taxon>Metazoa</taxon>
        <taxon>Chordata</taxon>
        <taxon>Craniata</taxon>
        <taxon>Vertebrata</taxon>
        <taxon>Euteleostomi</taxon>
        <taxon>Mammalia</taxon>
        <taxon>Eutheria</taxon>
        <taxon>Euarchontoglires</taxon>
        <taxon>Primates</taxon>
        <taxon>Haplorrhini</taxon>
        <taxon>Catarrhini</taxon>
        <taxon>Cercopithecidae</taxon>
        <taxon>Cercopithecinae</taxon>
        <taxon>Macaca</taxon>
    </lineage>
</organism>
<feature type="chain" id="PRO_0000069506" description="Chemerin-like receptor 2">
    <location>
        <begin position="1"/>
        <end position="355"/>
    </location>
</feature>
<feature type="topological domain" description="Extracellular" evidence="3">
    <location>
        <begin position="1"/>
        <end position="41"/>
    </location>
</feature>
<feature type="transmembrane region" description="Helical; Name=1" evidence="3">
    <location>
        <begin position="42"/>
        <end position="62"/>
    </location>
</feature>
<feature type="topological domain" description="Cytoplasmic" evidence="3">
    <location>
        <begin position="63"/>
        <end position="73"/>
    </location>
</feature>
<feature type="transmembrane region" description="Helical; Name=2" evidence="3">
    <location>
        <begin position="74"/>
        <end position="94"/>
    </location>
</feature>
<feature type="topological domain" description="Extracellular" evidence="3">
    <location>
        <begin position="95"/>
        <end position="112"/>
    </location>
</feature>
<feature type="transmembrane region" description="Helical; Name=3" evidence="3">
    <location>
        <begin position="113"/>
        <end position="133"/>
    </location>
</feature>
<feature type="topological domain" description="Cytoplasmic" evidence="3">
    <location>
        <begin position="134"/>
        <end position="154"/>
    </location>
</feature>
<feature type="transmembrane region" description="Helical; Name=4" evidence="3">
    <location>
        <begin position="155"/>
        <end position="175"/>
    </location>
</feature>
<feature type="topological domain" description="Extracellular" evidence="3">
    <location>
        <begin position="176"/>
        <end position="210"/>
    </location>
</feature>
<feature type="transmembrane region" description="Helical; Name=5" evidence="3">
    <location>
        <begin position="211"/>
        <end position="231"/>
    </location>
</feature>
<feature type="topological domain" description="Cytoplasmic" evidence="3">
    <location>
        <begin position="232"/>
        <end position="247"/>
    </location>
</feature>
<feature type="transmembrane region" description="Helical; Name=6" evidence="3">
    <location>
        <begin position="248"/>
        <end position="268"/>
    </location>
</feature>
<feature type="topological domain" description="Extracellular" evidence="3">
    <location>
        <begin position="269"/>
        <end position="286"/>
    </location>
</feature>
<feature type="transmembrane region" description="Helical; Name=7" evidence="3">
    <location>
        <begin position="287"/>
        <end position="307"/>
    </location>
</feature>
<feature type="topological domain" description="Cytoplasmic" evidence="3">
    <location>
        <begin position="308"/>
        <end position="355"/>
    </location>
</feature>
<feature type="glycosylation site" description="N-linked (GlcNAc...) asparagine" evidence="3">
    <location>
        <position position="14"/>
    </location>
</feature>
<feature type="disulfide bond" evidence="4">
    <location>
        <begin position="110"/>
        <end position="187"/>
    </location>
</feature>
<gene>
    <name type="primary">CMKLR2</name>
    <name type="synonym">GPR1</name>
</gene>
<protein>
    <recommendedName>
        <fullName>Chemerin-like receptor 2</fullName>
    </recommendedName>
    <alternativeName>
        <fullName>Chemerin chemokine-like receptor 2</fullName>
    </alternativeName>
    <alternativeName>
        <fullName>Chemokine-like receptor 2</fullName>
    </alternativeName>
    <alternativeName>
        <fullName>G-protein coupled receptor 1</fullName>
    </alternativeName>
</protein>
<accession>Q95LH1</accession>
<comment type="function">
    <text evidence="1 2">Receptor for chemoattractant adipokine chemerin/RARRES2 suggesting a role for this receptor in the regulation of inflammation and energy homesotasis (By similarity). Signals mainly via beta-arrestin pathway. Binding of RARRES2 activates weakly G proteins, calcium mobilization and MAPK1/MAPK3 (ERK1/2) phosphorylation too. Acts also as a receptor for TAFA1, mediates its effects on neuronal stem-cell proliferation and differentiation via the activation of ROCK/ERK and ROCK/STAT3 signaling pathway (By similarity).</text>
</comment>
<comment type="subcellular location">
    <subcellularLocation>
        <location evidence="2">Cell membrane</location>
        <topology evidence="3">Multi-pass membrane protein</topology>
    </subcellularLocation>
    <text evidence="1 2">Internalizes in presence of its ligand, TAFA1 (By similarity). Internalizes efficiently in response to RARRES2 (By similarity).</text>
</comment>
<comment type="similarity">
    <text evidence="5">Belongs to the chemokine-like receptor (CMKLR) family.</text>
</comment>
<keyword id="KW-1003">Cell membrane</keyword>
<keyword id="KW-1015">Disulfide bond</keyword>
<keyword id="KW-0297">G-protein coupled receptor</keyword>
<keyword id="KW-0325">Glycoprotein</keyword>
<keyword id="KW-0472">Membrane</keyword>
<keyword id="KW-0675">Receptor</keyword>
<keyword id="KW-1185">Reference proteome</keyword>
<keyword id="KW-0807">Transducer</keyword>
<keyword id="KW-0812">Transmembrane</keyword>
<keyword id="KW-1133">Transmembrane helix</keyword>
<sequence length="355" mass="41371">MEDLEETLFEEFENYSYALDYYSLESDLEEKVQLGVVHWVSLVLYCLSFVLGIPGNAIVIWFTGFKWKRTVSTLWFLNLAIADFIFLLFLPLYISYVVMNFHWPFGIWLCKANSFTAQLNMFASVFFLTVISLDHYIHLIHPVLSHRHRTLKNSLIVIIFIWLLASLIGGPALYFRDTVEFNNHTLCYNNFQKHDPDLTVIRHHVLTWVKYIVGYLFPLLTMSICYLCLILKVKKRSILISSRHFWTILAVVVAFVVCWTPYHLFSIWELTIHHNSYSHHVMQAGIPLSTGLAFLNSCLNPILYVLISKKFQARFRSSVAEILKYTLWEVSCSGTVSEQLRNSETKNLCLLETAQ</sequence>
<evidence type="ECO:0000250" key="1">
    <source>
        <dbReference type="UniProtKB" id="P46091"/>
    </source>
</evidence>
<evidence type="ECO:0000250" key="2">
    <source>
        <dbReference type="UniProtKB" id="Q8K087"/>
    </source>
</evidence>
<evidence type="ECO:0000255" key="3"/>
<evidence type="ECO:0000255" key="4">
    <source>
        <dbReference type="PROSITE-ProRule" id="PRU00521"/>
    </source>
</evidence>
<evidence type="ECO:0000305" key="5"/>
<reference key="1">
    <citation type="submission" date="2000-08" db="EMBL/GenBank/DDBJ databases">
        <title>Cloning and sequencing of simian G-protein coupled receptors, which may function as SIV/SHIV co-receptors, from cynomolgus macaque PBMCs.</title>
        <authorList>
            <person name="Wade-Evans A.M."/>
            <person name="Javan C."/>
            <person name="Russell J."/>
            <person name="Jenkins A."/>
        </authorList>
    </citation>
    <scope>NUCLEOTIDE SEQUENCE [MRNA]</scope>
</reference>